<gene>
    <name evidence="1" type="primary">lpxB</name>
    <name type="ordered locus">VC0395_A1838</name>
    <name type="ordered locus">VC395_2363</name>
</gene>
<dbReference type="EC" id="2.4.1.182" evidence="1"/>
<dbReference type="EMBL" id="CP000627">
    <property type="protein sequence ID" value="ABQ20419.1"/>
    <property type="molecule type" value="Genomic_DNA"/>
</dbReference>
<dbReference type="EMBL" id="CP001235">
    <property type="protein sequence ID" value="ACP10353.1"/>
    <property type="molecule type" value="Genomic_DNA"/>
</dbReference>
<dbReference type="RefSeq" id="WP_001081509.1">
    <property type="nucleotide sequence ID" value="NZ_JAACZH010000008.1"/>
</dbReference>
<dbReference type="SMR" id="A5F627"/>
<dbReference type="CAZy" id="GT19">
    <property type="family name" value="Glycosyltransferase Family 19"/>
</dbReference>
<dbReference type="KEGG" id="vco:VC0395_A1838"/>
<dbReference type="KEGG" id="vcr:VC395_2363"/>
<dbReference type="PATRIC" id="fig|345073.21.peg.2278"/>
<dbReference type="eggNOG" id="COG0763">
    <property type="taxonomic scope" value="Bacteria"/>
</dbReference>
<dbReference type="HOGENOM" id="CLU_036577_3_0_6"/>
<dbReference type="OrthoDB" id="9801642at2"/>
<dbReference type="UniPathway" id="UPA00973"/>
<dbReference type="Proteomes" id="UP000000249">
    <property type="component" value="Chromosome 2"/>
</dbReference>
<dbReference type="GO" id="GO:0016020">
    <property type="term" value="C:membrane"/>
    <property type="evidence" value="ECO:0007669"/>
    <property type="project" value="GOC"/>
</dbReference>
<dbReference type="GO" id="GO:0008915">
    <property type="term" value="F:lipid-A-disaccharide synthase activity"/>
    <property type="evidence" value="ECO:0007669"/>
    <property type="project" value="UniProtKB-UniRule"/>
</dbReference>
<dbReference type="GO" id="GO:0005543">
    <property type="term" value="F:phospholipid binding"/>
    <property type="evidence" value="ECO:0007669"/>
    <property type="project" value="TreeGrafter"/>
</dbReference>
<dbReference type="GO" id="GO:0009245">
    <property type="term" value="P:lipid A biosynthetic process"/>
    <property type="evidence" value="ECO:0007669"/>
    <property type="project" value="UniProtKB-UniRule"/>
</dbReference>
<dbReference type="HAMAP" id="MF_00392">
    <property type="entry name" value="LpxB"/>
    <property type="match status" value="1"/>
</dbReference>
<dbReference type="InterPro" id="IPR003835">
    <property type="entry name" value="Glyco_trans_19"/>
</dbReference>
<dbReference type="NCBIfam" id="TIGR00215">
    <property type="entry name" value="lpxB"/>
    <property type="match status" value="1"/>
</dbReference>
<dbReference type="PANTHER" id="PTHR30372">
    <property type="entry name" value="LIPID-A-DISACCHARIDE SYNTHASE"/>
    <property type="match status" value="1"/>
</dbReference>
<dbReference type="PANTHER" id="PTHR30372:SF4">
    <property type="entry name" value="LIPID-A-DISACCHARIDE SYNTHASE, MITOCHONDRIAL-RELATED"/>
    <property type="match status" value="1"/>
</dbReference>
<dbReference type="Pfam" id="PF02684">
    <property type="entry name" value="LpxB"/>
    <property type="match status" value="1"/>
</dbReference>
<dbReference type="SUPFAM" id="SSF53756">
    <property type="entry name" value="UDP-Glycosyltransferase/glycogen phosphorylase"/>
    <property type="match status" value="1"/>
</dbReference>
<name>LPXB_VIBC3</name>
<comment type="function">
    <text evidence="1">Condensation of UDP-2,3-diacylglucosamine and 2,3-diacylglucosamine-1-phosphate to form lipid A disaccharide, a precursor of lipid A, a phosphorylated glycolipid that anchors the lipopolysaccharide to the outer membrane of the cell.</text>
</comment>
<comment type="catalytic activity">
    <reaction evidence="1">
        <text>a lipid X + a UDP-2-N,3-O-bis[(3R)-3-hydroxyacyl]-alpha-D-glucosamine = a lipid A disaccharide + UDP + H(+)</text>
        <dbReference type="Rhea" id="RHEA:67828"/>
        <dbReference type="ChEBI" id="CHEBI:15378"/>
        <dbReference type="ChEBI" id="CHEBI:58223"/>
        <dbReference type="ChEBI" id="CHEBI:137748"/>
        <dbReference type="ChEBI" id="CHEBI:176338"/>
        <dbReference type="ChEBI" id="CHEBI:176343"/>
        <dbReference type="EC" id="2.4.1.182"/>
    </reaction>
</comment>
<comment type="pathway">
    <text evidence="1">Bacterial outer membrane biogenesis; LPS lipid A biosynthesis.</text>
</comment>
<comment type="similarity">
    <text evidence="1">Belongs to the LpxB family.</text>
</comment>
<organism>
    <name type="scientific">Vibrio cholerae serotype O1 (strain ATCC 39541 / Classical Ogawa 395 / O395)</name>
    <dbReference type="NCBI Taxonomy" id="345073"/>
    <lineage>
        <taxon>Bacteria</taxon>
        <taxon>Pseudomonadati</taxon>
        <taxon>Pseudomonadota</taxon>
        <taxon>Gammaproteobacteria</taxon>
        <taxon>Vibrionales</taxon>
        <taxon>Vibrionaceae</taxon>
        <taxon>Vibrio</taxon>
    </lineage>
</organism>
<keyword id="KW-0328">Glycosyltransferase</keyword>
<keyword id="KW-0441">Lipid A biosynthesis</keyword>
<keyword id="KW-0444">Lipid biosynthesis</keyword>
<keyword id="KW-0443">Lipid metabolism</keyword>
<keyword id="KW-0808">Transferase</keyword>
<reference key="1">
    <citation type="submission" date="2007-03" db="EMBL/GenBank/DDBJ databases">
        <authorList>
            <person name="Heidelberg J."/>
        </authorList>
    </citation>
    <scope>NUCLEOTIDE SEQUENCE [LARGE SCALE GENOMIC DNA]</scope>
    <source>
        <strain>ATCC 39541 / Classical Ogawa 395 / O395</strain>
    </source>
</reference>
<reference key="2">
    <citation type="journal article" date="2008" name="PLoS ONE">
        <title>A recalibrated molecular clock and independent origins for the cholera pandemic clones.</title>
        <authorList>
            <person name="Feng L."/>
            <person name="Reeves P.R."/>
            <person name="Lan R."/>
            <person name="Ren Y."/>
            <person name="Gao C."/>
            <person name="Zhou Z."/>
            <person name="Ren Y."/>
            <person name="Cheng J."/>
            <person name="Wang W."/>
            <person name="Wang J."/>
            <person name="Qian W."/>
            <person name="Li D."/>
            <person name="Wang L."/>
        </authorList>
    </citation>
    <scope>NUCLEOTIDE SEQUENCE [LARGE SCALE GENOMIC DNA]</scope>
    <source>
        <strain>ATCC 39541 / Classical Ogawa 395 / O395</strain>
    </source>
</reference>
<protein>
    <recommendedName>
        <fullName evidence="1">Lipid-A-disaccharide synthase</fullName>
        <ecNumber evidence="1">2.4.1.182</ecNumber>
    </recommendedName>
</protein>
<proteinExistence type="inferred from homology"/>
<feature type="chain" id="PRO_1000072226" description="Lipid-A-disaccharide synthase">
    <location>
        <begin position="1"/>
        <end position="379"/>
    </location>
</feature>
<sequence>MNRPLRIGIVVGELSGDTLGEGFIKAIRARYPDAEFVGIGGPKMNALGCQSLFDMEELAVMGLVEVLGRLPRLLKVKAELVKYFTANPPDVFVGIDAPDFNLRLELSLKQAGIKTVHYVSPSVWAWRQNRIHGIAAATHLVLAFLPFEKAFYDKFNVPCEFIGHTLADSIPLASDKLAARQLLGLDEQRRWLAVLPGSRGSEMKMLAEPFIATCQKLQARYPDLGFVVALVNAKRRAQFEQAWQQVAPELNFVLVDDTARNVITAADAVMLASGTVALECMLLKRPMVVGYRVNAFTAFLAKRLLKTPYVSLPNILAGEELVKELLQDHCTVDNLYHEVSRLLESDNQALMDKFTEMHQWIRKDADQQAAQAVLHLIQK</sequence>
<evidence type="ECO:0000255" key="1">
    <source>
        <dbReference type="HAMAP-Rule" id="MF_00392"/>
    </source>
</evidence>
<accession>A5F627</accession>
<accession>C3M3K4</accession>